<name>DOLK_YEAST</name>
<gene>
    <name type="primary">SEC59</name>
    <name type="ordered locus">YMR013C</name>
    <name type="ORF">YM8270.17C</name>
</gene>
<evidence type="ECO:0000255" key="1"/>
<evidence type="ECO:0000269" key="2">
    <source>
    </source>
</evidence>
<evidence type="ECO:0000269" key="3">
    <source>
    </source>
</evidence>
<evidence type="ECO:0000269" key="4">
    <source>
    </source>
</evidence>
<evidence type="ECO:0000269" key="5">
    <source>
    </source>
</evidence>
<evidence type="ECO:0000305" key="6"/>
<evidence type="ECO:0000305" key="7">
    <source>
    </source>
</evidence>
<evidence type="ECO:0000305" key="8">
    <source>
    </source>
</evidence>
<evidence type="ECO:0000305" key="9">
    <source>
    </source>
</evidence>
<proteinExistence type="evidence at protein level"/>
<feature type="chain" id="PRO_0000097662" description="Dolichol kinase">
    <location>
        <begin position="1"/>
        <end position="519"/>
    </location>
</feature>
<feature type="topological domain" description="Cytoplasmic" evidence="1">
    <location>
        <begin position="1"/>
        <end position="47"/>
    </location>
</feature>
<feature type="transmembrane region" description="Helical" evidence="1">
    <location>
        <begin position="48"/>
        <end position="68"/>
    </location>
</feature>
<feature type="topological domain" description="Lumenal" evidence="1">
    <location>
        <begin position="69"/>
        <end position="88"/>
    </location>
</feature>
<feature type="transmembrane region" description="Helical" evidence="1">
    <location>
        <begin position="89"/>
        <end position="109"/>
    </location>
</feature>
<feature type="topological domain" description="Cytoplasmic" evidence="1">
    <location>
        <begin position="110"/>
        <end position="118"/>
    </location>
</feature>
<feature type="transmembrane region" description="Helical" evidence="1">
    <location>
        <begin position="119"/>
        <end position="139"/>
    </location>
</feature>
<feature type="topological domain" description="Lumenal" evidence="1">
    <location>
        <begin position="140"/>
        <end position="151"/>
    </location>
</feature>
<feature type="transmembrane region" description="Helical" evidence="1">
    <location>
        <begin position="152"/>
        <end position="172"/>
    </location>
</feature>
<feature type="topological domain" description="Cytoplasmic" evidence="1">
    <location>
        <begin position="173"/>
        <end position="181"/>
    </location>
</feature>
<feature type="transmembrane region" description="Helical" evidence="1">
    <location>
        <begin position="182"/>
        <end position="203"/>
    </location>
</feature>
<feature type="topological domain" description="Lumenal" evidence="1">
    <location>
        <begin position="204"/>
        <end position="223"/>
    </location>
</feature>
<feature type="transmembrane region" description="Helical" evidence="1">
    <location>
        <begin position="224"/>
        <end position="244"/>
    </location>
</feature>
<feature type="topological domain" description="Cytoplasmic" evidence="1">
    <location>
        <begin position="245"/>
        <end position="253"/>
    </location>
</feature>
<feature type="transmembrane region" description="Helical" evidence="1">
    <location>
        <begin position="254"/>
        <end position="274"/>
    </location>
</feature>
<feature type="topological domain" description="Lumenal" evidence="1">
    <location>
        <begin position="275"/>
        <end position="294"/>
    </location>
</feature>
<feature type="transmembrane region" description="Helical" evidence="1">
    <location>
        <begin position="295"/>
        <end position="315"/>
    </location>
</feature>
<feature type="topological domain" description="Cytoplasmic" evidence="1">
    <location>
        <begin position="316"/>
        <end position="326"/>
    </location>
</feature>
<feature type="transmembrane region" description="Helical" evidence="1">
    <location>
        <begin position="327"/>
        <end position="347"/>
    </location>
</feature>
<feature type="topological domain" description="Lumenal" evidence="1">
    <location>
        <begin position="348"/>
        <end position="349"/>
    </location>
</feature>
<feature type="transmembrane region" description="Helical" evidence="1">
    <location>
        <begin position="350"/>
        <end position="370"/>
    </location>
</feature>
<feature type="topological domain" description="Cytoplasmic" evidence="1">
    <location>
        <begin position="371"/>
        <end position="394"/>
    </location>
</feature>
<feature type="transmembrane region" description="Helical" evidence="1">
    <location>
        <begin position="395"/>
        <end position="415"/>
    </location>
</feature>
<feature type="topological domain" description="Lumenal" evidence="1">
    <location>
        <begin position="416"/>
        <end position="417"/>
    </location>
</feature>
<feature type="transmembrane region" description="Helical" evidence="1">
    <location>
        <begin position="418"/>
        <end position="438"/>
    </location>
</feature>
<feature type="topological domain" description="Cytoplasmic" evidence="1">
    <location>
        <begin position="439"/>
        <end position="449"/>
    </location>
</feature>
<feature type="transmembrane region" description="Helical" evidence="1">
    <location>
        <begin position="450"/>
        <end position="470"/>
    </location>
</feature>
<feature type="topological domain" description="Lumenal" evidence="1">
    <location>
        <begin position="471"/>
        <end position="472"/>
    </location>
</feature>
<feature type="transmembrane region" description="Helical" evidence="1">
    <location>
        <begin position="473"/>
        <end position="493"/>
    </location>
</feature>
<feature type="topological domain" description="Cytoplasmic" evidence="1">
    <location>
        <begin position="494"/>
        <end position="519"/>
    </location>
</feature>
<comment type="function">
    <text evidence="2 3 4">Catalyzes CTP-mediated phosphorylation of dolichol, the terminal step in de novo dolichyl monophosphate (Dol-P) biosynthesis (PubMed:12213788, PubMed:1323123, PubMed:2657387). Dol-P is a lipid carrier essential for the synthesis of N-linked and O-linked oligosaccharides and for GPI anchors (PubMed:12213788, PubMed:1323123, PubMed:2657387).</text>
</comment>
<comment type="catalytic activity">
    <reaction evidence="7 8 9">
        <text>a di-trans,poly-cis-dolichol + CTP = a di-trans,poly-cis-dolichyl phosphate + CDP + H(+)</text>
        <dbReference type="Rhea" id="RHEA:13133"/>
        <dbReference type="Rhea" id="RHEA-COMP:19495"/>
        <dbReference type="Rhea" id="RHEA-COMP:19498"/>
        <dbReference type="ChEBI" id="CHEBI:15378"/>
        <dbReference type="ChEBI" id="CHEBI:16091"/>
        <dbReference type="ChEBI" id="CHEBI:37563"/>
        <dbReference type="ChEBI" id="CHEBI:57683"/>
        <dbReference type="ChEBI" id="CHEBI:58069"/>
        <dbReference type="EC" id="2.7.1.108"/>
    </reaction>
    <physiologicalReaction direction="left-to-right" evidence="8 9">
        <dbReference type="Rhea" id="RHEA:13134"/>
    </physiologicalReaction>
</comment>
<comment type="pathway">
    <text evidence="2 4 5">Protein modification; protein glycosylation.</text>
</comment>
<comment type="subcellular location">
    <subcellularLocation>
        <location evidence="4">Endoplasmic reticulum membrane</location>
        <topology evidence="1">Multi-pass membrane protein</topology>
    </subcellularLocation>
</comment>
<comment type="similarity">
    <text evidence="6">Belongs to the polyprenol kinase family.</text>
</comment>
<reference key="1">
    <citation type="journal article" date="1989" name="Mol. Cell. Biol.">
        <title>Sec59 encodes a membrane protein required for core glycosylation in Saccharomyces cerevisiae.</title>
        <authorList>
            <person name="Bernstein M."/>
            <person name="Kepes F."/>
            <person name="Schekman R."/>
        </authorList>
    </citation>
    <scope>NUCLEOTIDE SEQUENCE [GENOMIC DNA]</scope>
    <scope>FUNCTION</scope>
    <scope>CATALYTIC ACTIVITY</scope>
    <scope>SUBCELLULAR LOCATION</scope>
</reference>
<reference key="2">
    <citation type="journal article" date="1997" name="Nature">
        <title>The nucleotide sequence of Saccharomyces cerevisiae chromosome XIII.</title>
        <authorList>
            <person name="Bowman S."/>
            <person name="Churcher C.M."/>
            <person name="Badcock K."/>
            <person name="Brown D."/>
            <person name="Chillingworth T."/>
            <person name="Connor R."/>
            <person name="Dedman K."/>
            <person name="Devlin K."/>
            <person name="Gentles S."/>
            <person name="Hamlin N."/>
            <person name="Hunt S."/>
            <person name="Jagels K."/>
            <person name="Lye G."/>
            <person name="Moule S."/>
            <person name="Odell C."/>
            <person name="Pearson D."/>
            <person name="Rajandream M.A."/>
            <person name="Rice P."/>
            <person name="Skelton J."/>
            <person name="Walsh S.V."/>
            <person name="Whitehead S."/>
            <person name="Barrell B.G."/>
        </authorList>
    </citation>
    <scope>NUCLEOTIDE SEQUENCE [LARGE SCALE GENOMIC DNA]</scope>
    <source>
        <strain>ATCC 204508 / S288c</strain>
    </source>
</reference>
<reference key="3">
    <citation type="journal article" date="2014" name="G3 (Bethesda)">
        <title>The reference genome sequence of Saccharomyces cerevisiae: Then and now.</title>
        <authorList>
            <person name="Engel S.R."/>
            <person name="Dietrich F.S."/>
            <person name="Fisk D.G."/>
            <person name="Binkley G."/>
            <person name="Balakrishnan R."/>
            <person name="Costanzo M.C."/>
            <person name="Dwight S.S."/>
            <person name="Hitz B.C."/>
            <person name="Karra K."/>
            <person name="Nash R.S."/>
            <person name="Weng S."/>
            <person name="Wong E.D."/>
            <person name="Lloyd P."/>
            <person name="Skrzypek M.S."/>
            <person name="Miyasato S.R."/>
            <person name="Simison M."/>
            <person name="Cherry J.M."/>
        </authorList>
    </citation>
    <scope>GENOME REANNOTATION</scope>
    <source>
        <strain>ATCC 204508 / S288c</strain>
    </source>
</reference>
<reference key="4">
    <citation type="journal article" date="2007" name="Genome Res.">
        <title>Approaching a complete repository of sequence-verified protein-encoding clones for Saccharomyces cerevisiae.</title>
        <authorList>
            <person name="Hu Y."/>
            <person name="Rolfs A."/>
            <person name="Bhullar B."/>
            <person name="Murthy T.V.S."/>
            <person name="Zhu C."/>
            <person name="Berger M.F."/>
            <person name="Camargo A.A."/>
            <person name="Kelley F."/>
            <person name="McCarron S."/>
            <person name="Jepson D."/>
            <person name="Richardson A."/>
            <person name="Raphael J."/>
            <person name="Moreira D."/>
            <person name="Taycher E."/>
            <person name="Zuo D."/>
            <person name="Mohr S."/>
            <person name="Kane M.F."/>
            <person name="Williamson J."/>
            <person name="Simpson A.J.G."/>
            <person name="Bulyk M.L."/>
            <person name="Harlow E."/>
            <person name="Marsischky G."/>
            <person name="Kolodner R.D."/>
            <person name="LaBaer J."/>
        </authorList>
    </citation>
    <scope>NUCLEOTIDE SEQUENCE [GENOMIC DNA]</scope>
    <source>
        <strain>ATCC 204508 / S288c</strain>
    </source>
</reference>
<reference key="5">
    <citation type="journal article" date="1992" name="Proc. Natl. Acad. Sci. U.S.A.">
        <title>Saccharomyces cerevisiae sec59 cells are deficient in dolichol kinase activity.</title>
        <authorList>
            <person name="Heller L."/>
            <person name="Orlean P."/>
            <person name="Adair W.L. Jr."/>
        </authorList>
    </citation>
    <scope>FUNCTION</scope>
    <scope>CATALYTIC ACTIVITY</scope>
    <source>
        <strain>ATCC 204508 / S288c</strain>
    </source>
</reference>
<reference key="6">
    <citation type="journal article" date="2002" name="Glycobiology">
        <title>Expression and characterization of a human cDNA that complements the temperature-sensitive defect in dolichol kinase activity in the yeast sec59-1 mutant: the enzymatic phosphorylation of dolichol and diacylglycerol are catalyzed by separate CTP-mediated kinase activities in Saccharomyces cerevisiae.</title>
        <authorList>
            <person name="Fernandez F."/>
            <person name="Shridas P."/>
            <person name="Jiang S."/>
            <person name="Aebi M."/>
            <person name="Waechter C.J."/>
        </authorList>
    </citation>
    <scope>FUNCTION</scope>
    <scope>CATALYTIC ACTIVITY</scope>
</reference>
<reference key="7">
    <citation type="journal article" date="2006" name="Proc. Natl. Acad. Sci. U.S.A.">
        <title>A global topology map of the Saccharomyces cerevisiae membrane proteome.</title>
        <authorList>
            <person name="Kim H."/>
            <person name="Melen K."/>
            <person name="Oesterberg M."/>
            <person name="von Heijne G."/>
        </authorList>
    </citation>
    <scope>TOPOLOGY [LARGE SCALE ANALYSIS]</scope>
    <source>
        <strain>ATCC 208353 / W303-1A</strain>
    </source>
</reference>
<keyword id="KW-0256">Endoplasmic reticulum</keyword>
<keyword id="KW-0418">Kinase</keyword>
<keyword id="KW-0472">Membrane</keyword>
<keyword id="KW-1185">Reference proteome</keyword>
<keyword id="KW-0808">Transferase</keyword>
<keyword id="KW-0812">Transmembrane</keyword>
<keyword id="KW-1133">Transmembrane helix</keyword>
<dbReference type="EC" id="2.7.1.108" evidence="7 8 9"/>
<dbReference type="EMBL" id="M25779">
    <property type="protein sequence ID" value="AAA35033.1"/>
    <property type="molecule type" value="Genomic_DNA"/>
</dbReference>
<dbReference type="EMBL" id="Z48613">
    <property type="protein sequence ID" value="CAA88530.1"/>
    <property type="molecule type" value="Genomic_DNA"/>
</dbReference>
<dbReference type="EMBL" id="AY692829">
    <property type="protein sequence ID" value="AAT92848.1"/>
    <property type="molecule type" value="Genomic_DNA"/>
</dbReference>
<dbReference type="EMBL" id="BK006946">
    <property type="protein sequence ID" value="DAA09911.1"/>
    <property type="molecule type" value="Genomic_DNA"/>
</dbReference>
<dbReference type="PIR" id="JQ0124">
    <property type="entry name" value="JQ0124"/>
</dbReference>
<dbReference type="RefSeq" id="NP_013726.1">
    <property type="nucleotide sequence ID" value="NM_001182509.1"/>
</dbReference>
<dbReference type="BioGRID" id="35183">
    <property type="interactions" value="174"/>
</dbReference>
<dbReference type="DIP" id="DIP-8198N"/>
<dbReference type="FunCoup" id="P20048">
    <property type="interactions" value="118"/>
</dbReference>
<dbReference type="STRING" id="4932.YMR013C"/>
<dbReference type="iPTMnet" id="P20048"/>
<dbReference type="PaxDb" id="4932-YMR013C"/>
<dbReference type="PeptideAtlas" id="P20048"/>
<dbReference type="EnsemblFungi" id="YMR013C_mRNA">
    <property type="protein sequence ID" value="YMR013C"/>
    <property type="gene ID" value="YMR013C"/>
</dbReference>
<dbReference type="GeneID" id="855026"/>
<dbReference type="KEGG" id="sce:YMR013C"/>
<dbReference type="AGR" id="SGD:S000004615"/>
<dbReference type="SGD" id="S000004615">
    <property type="gene designation" value="SEC59"/>
</dbReference>
<dbReference type="VEuPathDB" id="FungiDB:YMR013C"/>
<dbReference type="eggNOG" id="KOG2468">
    <property type="taxonomic scope" value="Eukaryota"/>
</dbReference>
<dbReference type="GeneTree" id="ENSGT00390000004067"/>
<dbReference type="HOGENOM" id="CLU_031307_0_0_1"/>
<dbReference type="InParanoid" id="P20048"/>
<dbReference type="OMA" id="KNWENTF"/>
<dbReference type="OrthoDB" id="377083at2759"/>
<dbReference type="BioCyc" id="MetaCyc:YMR013C-MONOMER"/>
<dbReference type="BioCyc" id="YEAST:YMR013C-MONOMER"/>
<dbReference type="BRENDA" id="2.7.1.108">
    <property type="organism ID" value="984"/>
</dbReference>
<dbReference type="Reactome" id="R-SCE-446199">
    <property type="pathway name" value="Synthesis of Dolichyl-phosphate"/>
</dbReference>
<dbReference type="UniPathway" id="UPA00378"/>
<dbReference type="BioGRID-ORCS" id="855026">
    <property type="hits" value="0 hits in 10 CRISPR screens"/>
</dbReference>
<dbReference type="PRO" id="PR:P20048"/>
<dbReference type="Proteomes" id="UP000002311">
    <property type="component" value="Chromosome XIII"/>
</dbReference>
<dbReference type="RNAct" id="P20048">
    <property type="molecule type" value="protein"/>
</dbReference>
<dbReference type="GO" id="GO:0005783">
    <property type="term" value="C:endoplasmic reticulum"/>
    <property type="evidence" value="ECO:0007005"/>
    <property type="project" value="SGD"/>
</dbReference>
<dbReference type="GO" id="GO:0005789">
    <property type="term" value="C:endoplasmic reticulum membrane"/>
    <property type="evidence" value="ECO:0000314"/>
    <property type="project" value="SGD"/>
</dbReference>
<dbReference type="GO" id="GO:0004168">
    <property type="term" value="F:dolichol kinase activity"/>
    <property type="evidence" value="ECO:0000315"/>
    <property type="project" value="SGD"/>
</dbReference>
<dbReference type="GO" id="GO:0043048">
    <property type="term" value="P:dolichyl monophosphate biosynthetic process"/>
    <property type="evidence" value="ECO:0000315"/>
    <property type="project" value="SGD"/>
</dbReference>
<dbReference type="GO" id="GO:0006486">
    <property type="term" value="P:protein glycosylation"/>
    <property type="evidence" value="ECO:0007669"/>
    <property type="project" value="UniProtKB-UniPathway"/>
</dbReference>
<dbReference type="InterPro" id="IPR032974">
    <property type="entry name" value="Polypren_kinase"/>
</dbReference>
<dbReference type="PANTHER" id="PTHR13205:SF15">
    <property type="entry name" value="DOLICHOL KINASE"/>
    <property type="match status" value="1"/>
</dbReference>
<dbReference type="PANTHER" id="PTHR13205">
    <property type="entry name" value="TRANSMEMBRANE PROTEIN 15-RELATED"/>
    <property type="match status" value="1"/>
</dbReference>
<protein>
    <recommendedName>
        <fullName>Dolichol kinase</fullName>
        <ecNumber evidence="7 8 9">2.7.1.108</ecNumber>
    </recommendedName>
</protein>
<sequence length="519" mass="58906">MVAIIPHASFTTIKLTQKTEGSQMPTEEICKINMRTRKFDVGGNSRDFECFYSNFVQTVILLGTFFYCVERLQPWSIVTADISYKQIFVNVFVVCLIMVGLIFTKYWQHGYKSLPKFDTIYSLYLPFMVSLLFDTSSTVINTILILSVLNSYRWRTQLVVIILQLCLIFFNFEAGDRLKNIISIVINSLLSLILKYIGQLKSLDNIDSNLFSILLTNILYVSEAGTVHFRILKGIILALTTIISINYVLKKVMHFKPFMLSISFAIGLPLFANTFIHLEDGENPLLWLVKYILESTIRQKILFAWSSILILSIPSILIEKDSLSLNTSRKLWHFIIFLLIIPSFQMDSNFVKIALSGTIPVFLSIEYIRFQNLPPLGSAIELQLRRFADDRDHSGPLIISYLYLLFGISTPLLMNNSPMGLIGLGIGDSLASIIGKRYGRIRWKGTQKTLEGTLAFIVTSFIVCLVLLRFDKAAIFNHLTTLQLLTLCTLSGVLEGNSVLNDNILIPAFMMICEKLITL</sequence>
<organism>
    <name type="scientific">Saccharomyces cerevisiae (strain ATCC 204508 / S288c)</name>
    <name type="common">Baker's yeast</name>
    <dbReference type="NCBI Taxonomy" id="559292"/>
    <lineage>
        <taxon>Eukaryota</taxon>
        <taxon>Fungi</taxon>
        <taxon>Dikarya</taxon>
        <taxon>Ascomycota</taxon>
        <taxon>Saccharomycotina</taxon>
        <taxon>Saccharomycetes</taxon>
        <taxon>Saccharomycetales</taxon>
        <taxon>Saccharomycetaceae</taxon>
        <taxon>Saccharomyces</taxon>
    </lineage>
</organism>
<accession>P20048</accession>
<accession>D6VZI7</accession>